<accession>Q7WII1</accession>
<gene>
    <name evidence="1" type="primary">pdxK</name>
    <name type="ordered locus">BB2870</name>
</gene>
<comment type="function">
    <text evidence="1">B6-vitamer kinase involved in the salvage pathway of pyridoxal 5'-phosphate (PLP). Catalyzes the phosphorylation of pyridoxine (PN), pyridoxal (PL), and pyridoxamine (PM), forming their respective 5'-phosphorylated esters, i.e. PNP, PLP and PMP.</text>
</comment>
<comment type="catalytic activity">
    <reaction evidence="1">
        <text>pyridoxal + ATP = pyridoxal 5'-phosphate + ADP + H(+)</text>
        <dbReference type="Rhea" id="RHEA:10224"/>
        <dbReference type="ChEBI" id="CHEBI:15378"/>
        <dbReference type="ChEBI" id="CHEBI:17310"/>
        <dbReference type="ChEBI" id="CHEBI:30616"/>
        <dbReference type="ChEBI" id="CHEBI:456216"/>
        <dbReference type="ChEBI" id="CHEBI:597326"/>
        <dbReference type="EC" id="2.7.1.35"/>
    </reaction>
</comment>
<comment type="catalytic activity">
    <reaction evidence="1">
        <text>pyridoxine + ATP = pyridoxine 5'-phosphate + ADP + H(+)</text>
        <dbReference type="Rhea" id="RHEA:25108"/>
        <dbReference type="ChEBI" id="CHEBI:15378"/>
        <dbReference type="ChEBI" id="CHEBI:16709"/>
        <dbReference type="ChEBI" id="CHEBI:30616"/>
        <dbReference type="ChEBI" id="CHEBI:58589"/>
        <dbReference type="ChEBI" id="CHEBI:456216"/>
        <dbReference type="EC" id="2.7.1.35"/>
    </reaction>
</comment>
<comment type="catalytic activity">
    <reaction evidence="1">
        <text>pyridoxamine + ATP = pyridoxamine 5'-phosphate + ADP + H(+)</text>
        <dbReference type="Rhea" id="RHEA:25104"/>
        <dbReference type="ChEBI" id="CHEBI:15378"/>
        <dbReference type="ChEBI" id="CHEBI:30616"/>
        <dbReference type="ChEBI" id="CHEBI:57761"/>
        <dbReference type="ChEBI" id="CHEBI:58451"/>
        <dbReference type="ChEBI" id="CHEBI:456216"/>
        <dbReference type="EC" id="2.7.1.35"/>
    </reaction>
</comment>
<comment type="cofactor">
    <cofactor evidence="1">
        <name>Mg(2+)</name>
        <dbReference type="ChEBI" id="CHEBI:18420"/>
    </cofactor>
</comment>
<comment type="pathway">
    <text evidence="1">Cofactor metabolism; pyridoxal 5'-phosphate salvage; pyridoxal 5'-phosphate from pyridoxal: step 1/1.</text>
</comment>
<comment type="pathway">
    <text evidence="1">Cofactor metabolism; pyridoxal 5'-phosphate salvage; pyridoxine 5'-phosphate from pyridoxine: step 1/1.</text>
</comment>
<comment type="pathway">
    <text evidence="1">Cofactor metabolism; pyridoxal 5'-phosphate salvage; pyridoxamine 5'-phosphate from pyridoxamine: step 1/1.</text>
</comment>
<comment type="subunit">
    <text evidence="1">Homodimer.</text>
</comment>
<comment type="similarity">
    <text evidence="1">Belongs to the pyridoxine kinase family. PdxK subfamily.</text>
</comment>
<comment type="sequence caution" evidence="2">
    <conflict type="erroneous initiation">
        <sequence resource="EMBL-CDS" id="CAE33362"/>
    </conflict>
</comment>
<dbReference type="EC" id="2.7.1.35" evidence="1"/>
<dbReference type="EMBL" id="BX640445">
    <property type="protein sequence ID" value="CAE33362.1"/>
    <property type="status" value="ALT_INIT"/>
    <property type="molecule type" value="Genomic_DNA"/>
</dbReference>
<dbReference type="SMR" id="Q7WII1"/>
<dbReference type="KEGG" id="bbr:BB2870"/>
<dbReference type="eggNOG" id="COG2240">
    <property type="taxonomic scope" value="Bacteria"/>
</dbReference>
<dbReference type="HOGENOM" id="CLU_046496_3_1_4"/>
<dbReference type="UniPathway" id="UPA01068">
    <property type="reaction ID" value="UER00298"/>
</dbReference>
<dbReference type="UniPathway" id="UPA01068">
    <property type="reaction ID" value="UER00299"/>
</dbReference>
<dbReference type="UniPathway" id="UPA01068">
    <property type="reaction ID" value="UER00300"/>
</dbReference>
<dbReference type="Proteomes" id="UP000001027">
    <property type="component" value="Chromosome"/>
</dbReference>
<dbReference type="GO" id="GO:0005829">
    <property type="term" value="C:cytosol"/>
    <property type="evidence" value="ECO:0007669"/>
    <property type="project" value="TreeGrafter"/>
</dbReference>
<dbReference type="GO" id="GO:0005524">
    <property type="term" value="F:ATP binding"/>
    <property type="evidence" value="ECO:0007669"/>
    <property type="project" value="UniProtKB-UniRule"/>
</dbReference>
<dbReference type="GO" id="GO:0008902">
    <property type="term" value="F:hydroxymethylpyrimidine kinase activity"/>
    <property type="evidence" value="ECO:0007669"/>
    <property type="project" value="TreeGrafter"/>
</dbReference>
<dbReference type="GO" id="GO:0000287">
    <property type="term" value="F:magnesium ion binding"/>
    <property type="evidence" value="ECO:0007669"/>
    <property type="project" value="UniProtKB-UniRule"/>
</dbReference>
<dbReference type="GO" id="GO:0008478">
    <property type="term" value="F:pyridoxal kinase activity"/>
    <property type="evidence" value="ECO:0007669"/>
    <property type="project" value="UniProtKB-UniRule"/>
</dbReference>
<dbReference type="GO" id="GO:0008270">
    <property type="term" value="F:zinc ion binding"/>
    <property type="evidence" value="ECO:0007669"/>
    <property type="project" value="UniProtKB-UniRule"/>
</dbReference>
<dbReference type="GO" id="GO:0009443">
    <property type="term" value="P:pyridoxal 5'-phosphate salvage"/>
    <property type="evidence" value="ECO:0007669"/>
    <property type="project" value="UniProtKB-UniRule"/>
</dbReference>
<dbReference type="CDD" id="cd01173">
    <property type="entry name" value="pyridoxal_pyridoxamine_kinase"/>
    <property type="match status" value="1"/>
</dbReference>
<dbReference type="Gene3D" id="3.40.1190.20">
    <property type="match status" value="1"/>
</dbReference>
<dbReference type="HAMAP" id="MF_01638">
    <property type="entry name" value="PdxK"/>
    <property type="match status" value="1"/>
</dbReference>
<dbReference type="InterPro" id="IPR023479">
    <property type="entry name" value="PdxK"/>
</dbReference>
<dbReference type="InterPro" id="IPR013749">
    <property type="entry name" value="PM/HMP-P_kinase-1"/>
</dbReference>
<dbReference type="InterPro" id="IPR004625">
    <property type="entry name" value="PyrdxlKinase"/>
</dbReference>
<dbReference type="InterPro" id="IPR029056">
    <property type="entry name" value="Ribokinase-like"/>
</dbReference>
<dbReference type="NCBIfam" id="NF006034">
    <property type="entry name" value="PRK08176.1"/>
    <property type="match status" value="1"/>
</dbReference>
<dbReference type="PANTHER" id="PTHR10534">
    <property type="entry name" value="PYRIDOXAL KINASE"/>
    <property type="match status" value="1"/>
</dbReference>
<dbReference type="PANTHER" id="PTHR10534:SF15">
    <property type="entry name" value="PYRIDOXINE_PYRIDOXAL_PYRIDOXAMINE KINASE"/>
    <property type="match status" value="1"/>
</dbReference>
<dbReference type="Pfam" id="PF08543">
    <property type="entry name" value="Phos_pyr_kin"/>
    <property type="match status" value="1"/>
</dbReference>
<dbReference type="SUPFAM" id="SSF53613">
    <property type="entry name" value="Ribokinase-like"/>
    <property type="match status" value="1"/>
</dbReference>
<evidence type="ECO:0000255" key="1">
    <source>
        <dbReference type="HAMAP-Rule" id="MF_01638"/>
    </source>
</evidence>
<evidence type="ECO:0000305" key="2"/>
<feature type="chain" id="PRO_0000268832" description="Pyridoxine/pyridoxal/pyridoxamine kinase">
    <location>
        <begin position="1"/>
        <end position="283"/>
    </location>
</feature>
<feature type="binding site" evidence="1">
    <location>
        <position position="23"/>
    </location>
    <ligand>
        <name>substrate</name>
    </ligand>
</feature>
<feature type="binding site" evidence="1">
    <location>
        <position position="59"/>
    </location>
    <ligand>
        <name>substrate</name>
    </ligand>
</feature>
<feature type="binding site" evidence="1">
    <location>
        <position position="125"/>
    </location>
    <ligand>
        <name>ATP</name>
        <dbReference type="ChEBI" id="CHEBI:30616"/>
    </ligand>
</feature>
<feature type="binding site" evidence="1">
    <location>
        <position position="136"/>
    </location>
    <ligand>
        <name>Mg(2+)</name>
        <dbReference type="ChEBI" id="CHEBI:18420"/>
    </ligand>
</feature>
<feature type="binding site" evidence="1">
    <location>
        <position position="157"/>
    </location>
    <ligand>
        <name>ATP</name>
        <dbReference type="ChEBI" id="CHEBI:30616"/>
    </ligand>
</feature>
<feature type="binding site" evidence="1">
    <location>
        <position position="162"/>
    </location>
    <ligand>
        <name>ATP</name>
        <dbReference type="ChEBI" id="CHEBI:30616"/>
    </ligand>
</feature>
<feature type="binding site" evidence="1">
    <location>
        <position position="162"/>
    </location>
    <ligand>
        <name>Mg(2+)</name>
        <dbReference type="ChEBI" id="CHEBI:18420"/>
    </ligand>
</feature>
<feature type="binding site" evidence="1">
    <location>
        <position position="195"/>
    </location>
    <ligand>
        <name>ATP</name>
        <dbReference type="ChEBI" id="CHEBI:30616"/>
    </ligand>
</feature>
<feature type="binding site" evidence="1">
    <location>
        <begin position="222"/>
        <end position="225"/>
    </location>
    <ligand>
        <name>ATP</name>
        <dbReference type="ChEBI" id="CHEBI:30616"/>
    </ligand>
</feature>
<feature type="binding site" evidence="1">
    <location>
        <position position="232"/>
    </location>
    <ligand>
        <name>ATP</name>
        <dbReference type="ChEBI" id="CHEBI:30616"/>
    </ligand>
</feature>
<feature type="binding site" evidence="1">
    <location>
        <position position="234"/>
    </location>
    <ligand>
        <name>substrate</name>
    </ligand>
</feature>
<proteinExistence type="inferred from homology"/>
<protein>
    <recommendedName>
        <fullName evidence="1">Pyridoxine/pyridoxal/pyridoxamine kinase</fullName>
        <shortName evidence="1">PN/PL/PM kinase</shortName>
        <ecNumber evidence="1">2.7.1.35</ecNumber>
    </recommendedName>
    <alternativeName>
        <fullName evidence="1">B6-vitamer kinase</fullName>
    </alternativeName>
</protein>
<organism>
    <name type="scientific">Bordetella bronchiseptica (strain ATCC BAA-588 / NCTC 13252 / RB50)</name>
    <name type="common">Alcaligenes bronchisepticus</name>
    <dbReference type="NCBI Taxonomy" id="257310"/>
    <lineage>
        <taxon>Bacteria</taxon>
        <taxon>Pseudomonadati</taxon>
        <taxon>Pseudomonadota</taxon>
        <taxon>Betaproteobacteria</taxon>
        <taxon>Burkholderiales</taxon>
        <taxon>Alcaligenaceae</taxon>
        <taxon>Bordetella</taxon>
    </lineage>
</organism>
<reference key="1">
    <citation type="journal article" date="2003" name="Nat. Genet.">
        <title>Comparative analysis of the genome sequences of Bordetella pertussis, Bordetella parapertussis and Bordetella bronchiseptica.</title>
        <authorList>
            <person name="Parkhill J."/>
            <person name="Sebaihia M."/>
            <person name="Preston A."/>
            <person name="Murphy L.D."/>
            <person name="Thomson N.R."/>
            <person name="Harris D.E."/>
            <person name="Holden M.T.G."/>
            <person name="Churcher C.M."/>
            <person name="Bentley S.D."/>
            <person name="Mungall K.L."/>
            <person name="Cerdeno-Tarraga A.-M."/>
            <person name="Temple L."/>
            <person name="James K.D."/>
            <person name="Harris B."/>
            <person name="Quail M.A."/>
            <person name="Achtman M."/>
            <person name="Atkin R."/>
            <person name="Baker S."/>
            <person name="Basham D."/>
            <person name="Bason N."/>
            <person name="Cherevach I."/>
            <person name="Chillingworth T."/>
            <person name="Collins M."/>
            <person name="Cronin A."/>
            <person name="Davis P."/>
            <person name="Doggett J."/>
            <person name="Feltwell T."/>
            <person name="Goble A."/>
            <person name="Hamlin N."/>
            <person name="Hauser H."/>
            <person name="Holroyd S."/>
            <person name="Jagels K."/>
            <person name="Leather S."/>
            <person name="Moule S."/>
            <person name="Norberczak H."/>
            <person name="O'Neil S."/>
            <person name="Ormond D."/>
            <person name="Price C."/>
            <person name="Rabbinowitsch E."/>
            <person name="Rutter S."/>
            <person name="Sanders M."/>
            <person name="Saunders D."/>
            <person name="Seeger K."/>
            <person name="Sharp S."/>
            <person name="Simmonds M."/>
            <person name="Skelton J."/>
            <person name="Squares R."/>
            <person name="Squares S."/>
            <person name="Stevens K."/>
            <person name="Unwin L."/>
            <person name="Whitehead S."/>
            <person name="Barrell B.G."/>
            <person name="Maskell D.J."/>
        </authorList>
    </citation>
    <scope>NUCLEOTIDE SEQUENCE [LARGE SCALE GENOMIC DNA]</scope>
    <source>
        <strain>ATCC BAA-588 / NCTC 13252 / RB50</strain>
    </source>
</reference>
<name>PDXK_BORBR</name>
<keyword id="KW-0067">ATP-binding</keyword>
<keyword id="KW-0418">Kinase</keyword>
<keyword id="KW-0460">Magnesium</keyword>
<keyword id="KW-0479">Metal-binding</keyword>
<keyword id="KW-0547">Nucleotide-binding</keyword>
<keyword id="KW-0808">Transferase</keyword>
<keyword id="KW-0862">Zinc</keyword>
<sequence>MKLAAPNPQALAPLPIDVVSIQSQVVYGQVGNSVAVPVFNGFGLRVAAVPTVVLSNTPHYPSMHGGAVPLDWFEGYLADLGARGALAGVRVVQLGYLGGPAQAEALGRWIAGLVAVRPDLRVHIDPVIGDHDSGVYVAPGMVAAYRDHLLPLAQGLTPNGFELECLTGLPTGTMEQTIAAARTLLGGRARWVIVTSAAPATWPPGRVRVAVVTHDDAQVLEHAHVDTAPKGTGDMFGAALTGHLLAGQPVAEAARRAALQVIEALERTREAGCGELLLAGPLR</sequence>